<name>PRP31_ARATH</name>
<organism>
    <name type="scientific">Arabidopsis thaliana</name>
    <name type="common">Mouse-ear cress</name>
    <dbReference type="NCBI Taxonomy" id="3702"/>
    <lineage>
        <taxon>Eukaryota</taxon>
        <taxon>Viridiplantae</taxon>
        <taxon>Streptophyta</taxon>
        <taxon>Embryophyta</taxon>
        <taxon>Tracheophyta</taxon>
        <taxon>Spermatophyta</taxon>
        <taxon>Magnoliopsida</taxon>
        <taxon>eudicotyledons</taxon>
        <taxon>Gunneridae</taxon>
        <taxon>Pentapetalae</taxon>
        <taxon>rosids</taxon>
        <taxon>malvids</taxon>
        <taxon>Brassicales</taxon>
        <taxon>Brassicaceae</taxon>
        <taxon>Camelineae</taxon>
        <taxon>Arabidopsis</taxon>
    </lineage>
</organism>
<protein>
    <recommendedName>
        <fullName evidence="6">U4/U6 small nuclear ribonucleoprotein Prp31 homolog</fullName>
    </recommendedName>
    <alternativeName>
        <fullName evidence="6">Pre-mRNA-processing factor 31 homolog</fullName>
    </alternativeName>
    <alternativeName>
        <fullName evidence="6">Protein EMBRYO DEFECTIVE 1220</fullName>
    </alternativeName>
</protein>
<sequence length="485" mass="52645">MATLEDSFLADLDELSDNEAELDENDGDVGKEEEDVDMDMADLETLNYDDLDNVSKLQKSQRYADIMHKVEEALGKDSDGAEKGTVLEDDPEYKLIVDCNQLSVDIENEIVIVHNFIKDKYKLKFQELESLVHHPIDYACVVKKIGNETDLALVDLADLLPSAIIMVVSVTALTTKGSALPEDVLQKVLEACDRALDLDSARKKVLEFVESKMGSIAPNLSAIVGSAVAAKLMGTAGGLSALAKMPACNVQVLGHKRKNLAGFSSATSQSRVGYLEQTEIYQSTPPGLQARAGRLVAAKSTLAARVDATRGDPLGISGKAFREEIRKKIEKWQEPPPARQPKPLPVPDSEPKKRRGGRRLRKMKERYQVTDMRKLANRMAFGTPEESSLGDGLGEGYGMLGQAGSNRLRVSSVPSKLKINAKVAKKLKERQYAGGATTSGLTSSLAFTPVQGIELCNPQQALGLGSGTQSTYFSESGTFSKLKKI</sequence>
<reference key="1">
    <citation type="journal article" date="2000" name="Nature">
        <title>Sequence and analysis of chromosome 1 of the plant Arabidopsis thaliana.</title>
        <authorList>
            <person name="Theologis A."/>
            <person name="Ecker J.R."/>
            <person name="Palm C.J."/>
            <person name="Federspiel N.A."/>
            <person name="Kaul S."/>
            <person name="White O."/>
            <person name="Alonso J."/>
            <person name="Altafi H."/>
            <person name="Araujo R."/>
            <person name="Bowman C.L."/>
            <person name="Brooks S.Y."/>
            <person name="Buehler E."/>
            <person name="Chan A."/>
            <person name="Chao Q."/>
            <person name="Chen H."/>
            <person name="Cheuk R.F."/>
            <person name="Chin C.W."/>
            <person name="Chung M.K."/>
            <person name="Conn L."/>
            <person name="Conway A.B."/>
            <person name="Conway A.R."/>
            <person name="Creasy T.H."/>
            <person name="Dewar K."/>
            <person name="Dunn P."/>
            <person name="Etgu P."/>
            <person name="Feldblyum T.V."/>
            <person name="Feng J.-D."/>
            <person name="Fong B."/>
            <person name="Fujii C.Y."/>
            <person name="Gill J.E."/>
            <person name="Goldsmith A.D."/>
            <person name="Haas B."/>
            <person name="Hansen N.F."/>
            <person name="Hughes B."/>
            <person name="Huizar L."/>
            <person name="Hunter J.L."/>
            <person name="Jenkins J."/>
            <person name="Johnson-Hopson C."/>
            <person name="Khan S."/>
            <person name="Khaykin E."/>
            <person name="Kim C.J."/>
            <person name="Koo H.L."/>
            <person name="Kremenetskaia I."/>
            <person name="Kurtz D.B."/>
            <person name="Kwan A."/>
            <person name="Lam B."/>
            <person name="Langin-Hooper S."/>
            <person name="Lee A."/>
            <person name="Lee J.M."/>
            <person name="Lenz C.A."/>
            <person name="Li J.H."/>
            <person name="Li Y.-P."/>
            <person name="Lin X."/>
            <person name="Liu S.X."/>
            <person name="Liu Z.A."/>
            <person name="Luros J.S."/>
            <person name="Maiti R."/>
            <person name="Marziali A."/>
            <person name="Militscher J."/>
            <person name="Miranda M."/>
            <person name="Nguyen M."/>
            <person name="Nierman W.C."/>
            <person name="Osborne B.I."/>
            <person name="Pai G."/>
            <person name="Peterson J."/>
            <person name="Pham P.K."/>
            <person name="Rizzo M."/>
            <person name="Rooney T."/>
            <person name="Rowley D."/>
            <person name="Sakano H."/>
            <person name="Salzberg S.L."/>
            <person name="Schwartz J.R."/>
            <person name="Shinn P."/>
            <person name="Southwick A.M."/>
            <person name="Sun H."/>
            <person name="Tallon L.J."/>
            <person name="Tambunga G."/>
            <person name="Toriumi M.J."/>
            <person name="Town C.D."/>
            <person name="Utterback T."/>
            <person name="Van Aken S."/>
            <person name="Vaysberg M."/>
            <person name="Vysotskaia V.S."/>
            <person name="Walker M."/>
            <person name="Wu D."/>
            <person name="Yu G."/>
            <person name="Fraser C.M."/>
            <person name="Venter J.C."/>
            <person name="Davis R.W."/>
        </authorList>
    </citation>
    <scope>NUCLEOTIDE SEQUENCE [LARGE SCALE GENOMIC DNA]</scope>
    <source>
        <strain>cv. Columbia</strain>
    </source>
</reference>
<reference key="2">
    <citation type="journal article" date="2017" name="Plant J.">
        <title>Araport11: a complete reannotation of the Arabidopsis thaliana reference genome.</title>
        <authorList>
            <person name="Cheng C.Y."/>
            <person name="Krishnakumar V."/>
            <person name="Chan A.P."/>
            <person name="Thibaud-Nissen F."/>
            <person name="Schobel S."/>
            <person name="Town C.D."/>
        </authorList>
    </citation>
    <scope>GENOME REANNOTATION</scope>
    <source>
        <strain>cv. Columbia</strain>
    </source>
</reference>
<reference key="3">
    <citation type="journal article" date="2003" name="Science">
        <title>Empirical analysis of transcriptional activity in the Arabidopsis genome.</title>
        <authorList>
            <person name="Yamada K."/>
            <person name="Lim J."/>
            <person name="Dale J.M."/>
            <person name="Chen H."/>
            <person name="Shinn P."/>
            <person name="Palm C.J."/>
            <person name="Southwick A.M."/>
            <person name="Wu H.C."/>
            <person name="Kim C.J."/>
            <person name="Nguyen M."/>
            <person name="Pham P.K."/>
            <person name="Cheuk R.F."/>
            <person name="Karlin-Newmann G."/>
            <person name="Liu S.X."/>
            <person name="Lam B."/>
            <person name="Sakano H."/>
            <person name="Wu T."/>
            <person name="Yu G."/>
            <person name="Miranda M."/>
            <person name="Quach H.L."/>
            <person name="Tripp M."/>
            <person name="Chang C.H."/>
            <person name="Lee J.M."/>
            <person name="Toriumi M.J."/>
            <person name="Chan M.M."/>
            <person name="Tang C.C."/>
            <person name="Onodera C.S."/>
            <person name="Deng J.M."/>
            <person name="Akiyama K."/>
            <person name="Ansari Y."/>
            <person name="Arakawa T."/>
            <person name="Banh J."/>
            <person name="Banno F."/>
            <person name="Bowser L."/>
            <person name="Brooks S.Y."/>
            <person name="Carninci P."/>
            <person name="Chao Q."/>
            <person name="Choy N."/>
            <person name="Enju A."/>
            <person name="Goldsmith A.D."/>
            <person name="Gurjal M."/>
            <person name="Hansen N.F."/>
            <person name="Hayashizaki Y."/>
            <person name="Johnson-Hopson C."/>
            <person name="Hsuan V.W."/>
            <person name="Iida K."/>
            <person name="Karnes M."/>
            <person name="Khan S."/>
            <person name="Koesema E."/>
            <person name="Ishida J."/>
            <person name="Jiang P.X."/>
            <person name="Jones T."/>
            <person name="Kawai J."/>
            <person name="Kamiya A."/>
            <person name="Meyers C."/>
            <person name="Nakajima M."/>
            <person name="Narusaka M."/>
            <person name="Seki M."/>
            <person name="Sakurai T."/>
            <person name="Satou M."/>
            <person name="Tamse R."/>
            <person name="Vaysberg M."/>
            <person name="Wallender E.K."/>
            <person name="Wong C."/>
            <person name="Yamamura Y."/>
            <person name="Yuan S."/>
            <person name="Shinozaki K."/>
            <person name="Davis R.W."/>
            <person name="Theologis A."/>
            <person name="Ecker J.R."/>
        </authorList>
    </citation>
    <scope>NUCLEOTIDE SEQUENCE [LARGE SCALE MRNA]</scope>
    <source>
        <strain>cv. Columbia</strain>
    </source>
</reference>
<reference key="4">
    <citation type="submission" date="2002-03" db="EMBL/GenBank/DDBJ databases">
        <title>Full-length cDNA from Arabidopsis thaliana.</title>
        <authorList>
            <person name="Brover V.V."/>
            <person name="Troukhan M.E."/>
            <person name="Alexandrov N.A."/>
            <person name="Lu Y.-P."/>
            <person name="Flavell R.B."/>
            <person name="Feldmann K.A."/>
        </authorList>
    </citation>
    <scope>NUCLEOTIDE SEQUENCE [LARGE SCALE MRNA]</scope>
</reference>
<reference key="5">
    <citation type="journal article" date="2015" name="Mol. Plant">
        <title>The splicing factor PRP31 is involved in transcriptional gene silencing and stress response in Arabidopsis.</title>
        <authorList>
            <person name="Du J.L."/>
            <person name="Zhang S.W."/>
            <person name="Huang H.W."/>
            <person name="Cai T."/>
            <person name="Li L."/>
            <person name="Chen S."/>
            <person name="He X.J."/>
        </authorList>
    </citation>
    <scope>FUNCTION</scope>
    <scope>INTERACTION WITH STA1 AND ZOP1</scope>
    <scope>SUBCELLULAR LOCATION</scope>
    <scope>DISRUPTION PHENOTYPE</scope>
</reference>
<feature type="chain" id="PRO_0000437258" description="U4/U6 small nuclear ribonucleoprotein Prp31 homolog">
    <location>
        <begin position="1"/>
        <end position="485"/>
    </location>
</feature>
<feature type="domain" description="Nop" evidence="2">
    <location>
        <begin position="216"/>
        <end position="334"/>
    </location>
</feature>
<feature type="region of interest" description="Disordered" evidence="3">
    <location>
        <begin position="1"/>
        <end position="36"/>
    </location>
</feature>
<feature type="region of interest" description="Disordered" evidence="3">
    <location>
        <begin position="329"/>
        <end position="361"/>
    </location>
</feature>
<feature type="short sequence motif" description="Nuclear localization signal" evidence="6">
    <location>
        <begin position="352"/>
        <end position="365"/>
    </location>
</feature>
<feature type="compositionally biased region" description="Acidic residues" evidence="3">
    <location>
        <begin position="11"/>
        <end position="36"/>
    </location>
</feature>
<feature type="compositionally biased region" description="Pro residues" evidence="3">
    <location>
        <begin position="334"/>
        <end position="348"/>
    </location>
</feature>
<feature type="compositionally biased region" description="Basic residues" evidence="3">
    <location>
        <begin position="352"/>
        <end position="361"/>
    </location>
</feature>
<evidence type="ECO:0000250" key="1">
    <source>
        <dbReference type="UniProtKB" id="Q8WWY3"/>
    </source>
</evidence>
<evidence type="ECO:0000255" key="2">
    <source>
        <dbReference type="PROSITE-ProRule" id="PRU00690"/>
    </source>
</evidence>
<evidence type="ECO:0000256" key="3">
    <source>
        <dbReference type="SAM" id="MobiDB-lite"/>
    </source>
</evidence>
<evidence type="ECO:0000269" key="4">
    <source>
    </source>
</evidence>
<evidence type="ECO:0000303" key="5">
    <source>
    </source>
</evidence>
<evidence type="ECO:0000305" key="6"/>
<evidence type="ECO:0000312" key="7">
    <source>
        <dbReference type="Araport" id="AT1G60170"/>
    </source>
</evidence>
<evidence type="ECO:0000312" key="8">
    <source>
        <dbReference type="EMBL" id="AAC24050.1"/>
    </source>
</evidence>
<dbReference type="EMBL" id="AC004473">
    <property type="protein sequence ID" value="AAC24050.1"/>
    <property type="status" value="ALT_SEQ"/>
    <property type="molecule type" value="Genomic_DNA"/>
</dbReference>
<dbReference type="EMBL" id="CP002684">
    <property type="protein sequence ID" value="AEE33664.1"/>
    <property type="molecule type" value="Genomic_DNA"/>
</dbReference>
<dbReference type="EMBL" id="AY080777">
    <property type="protein sequence ID" value="AAL87261.1"/>
    <property type="molecule type" value="mRNA"/>
</dbReference>
<dbReference type="EMBL" id="AY117155">
    <property type="protein sequence ID" value="AAM51230.1"/>
    <property type="molecule type" value="mRNA"/>
</dbReference>
<dbReference type="EMBL" id="AY084782">
    <property type="protein sequence ID" value="AAM61349.1"/>
    <property type="molecule type" value="mRNA"/>
</dbReference>
<dbReference type="PIR" id="T02269">
    <property type="entry name" value="T02269"/>
</dbReference>
<dbReference type="RefSeq" id="NP_564754.1">
    <property type="nucleotide sequence ID" value="NM_104707.4"/>
</dbReference>
<dbReference type="SMR" id="Q8RXN6"/>
<dbReference type="FunCoup" id="Q8RXN6">
    <property type="interactions" value="5041"/>
</dbReference>
<dbReference type="IntAct" id="Q8RXN6">
    <property type="interactions" value="1"/>
</dbReference>
<dbReference type="MINT" id="Q8RXN6"/>
<dbReference type="STRING" id="3702.Q8RXN6"/>
<dbReference type="iPTMnet" id="Q8RXN6"/>
<dbReference type="PaxDb" id="3702-AT1G60170.1"/>
<dbReference type="ProteomicsDB" id="226508"/>
<dbReference type="EnsemblPlants" id="AT1G60170.1">
    <property type="protein sequence ID" value="AT1G60170.1"/>
    <property type="gene ID" value="AT1G60170"/>
</dbReference>
<dbReference type="GeneID" id="842312"/>
<dbReference type="Gramene" id="AT1G60170.1">
    <property type="protein sequence ID" value="AT1G60170.1"/>
    <property type="gene ID" value="AT1G60170"/>
</dbReference>
<dbReference type="KEGG" id="ath:AT1G60170"/>
<dbReference type="Araport" id="AT1G60170"/>
<dbReference type="TAIR" id="AT1G60170">
    <property type="gene designation" value="PRP31"/>
</dbReference>
<dbReference type="eggNOG" id="KOG2574">
    <property type="taxonomic scope" value="Eukaryota"/>
</dbReference>
<dbReference type="HOGENOM" id="CLU_026337_2_1_1"/>
<dbReference type="InParanoid" id="Q8RXN6"/>
<dbReference type="OMA" id="IGNGPMD"/>
<dbReference type="OrthoDB" id="4771285at2759"/>
<dbReference type="PhylomeDB" id="Q8RXN6"/>
<dbReference type="CD-CODE" id="4299E36E">
    <property type="entry name" value="Nucleolus"/>
</dbReference>
<dbReference type="PRO" id="PR:Q8RXN6"/>
<dbReference type="Proteomes" id="UP000006548">
    <property type="component" value="Chromosome 1"/>
</dbReference>
<dbReference type="ExpressionAtlas" id="Q8RXN6">
    <property type="expression patterns" value="baseline and differential"/>
</dbReference>
<dbReference type="GO" id="GO:0015030">
    <property type="term" value="C:Cajal body"/>
    <property type="evidence" value="ECO:0000314"/>
    <property type="project" value="UniProtKB"/>
</dbReference>
<dbReference type="GO" id="GO:0005634">
    <property type="term" value="C:nucleus"/>
    <property type="evidence" value="ECO:0000314"/>
    <property type="project" value="UniProtKB"/>
</dbReference>
<dbReference type="GO" id="GO:0005681">
    <property type="term" value="C:spliceosomal complex"/>
    <property type="evidence" value="ECO:0007669"/>
    <property type="project" value="UniProtKB-KW"/>
</dbReference>
<dbReference type="GO" id="GO:0046540">
    <property type="term" value="C:U4/U6 x U5 tri-snRNP complex"/>
    <property type="evidence" value="ECO:0007669"/>
    <property type="project" value="InterPro"/>
</dbReference>
<dbReference type="GO" id="GO:0003723">
    <property type="term" value="F:RNA binding"/>
    <property type="evidence" value="ECO:0007669"/>
    <property type="project" value="UniProtKB-KW"/>
</dbReference>
<dbReference type="GO" id="GO:0070417">
    <property type="term" value="P:cellular response to cold"/>
    <property type="evidence" value="ECO:0000315"/>
    <property type="project" value="TAIR"/>
</dbReference>
<dbReference type="GO" id="GO:0006346">
    <property type="term" value="P:DNA methylation-dependent constitutive heterochromatin formation"/>
    <property type="evidence" value="ECO:0000315"/>
    <property type="project" value="TAIR"/>
</dbReference>
<dbReference type="GO" id="GO:0009409">
    <property type="term" value="P:response to cold"/>
    <property type="evidence" value="ECO:0000315"/>
    <property type="project" value="TAIR"/>
</dbReference>
<dbReference type="GO" id="GO:0008380">
    <property type="term" value="P:RNA splicing"/>
    <property type="evidence" value="ECO:0000315"/>
    <property type="project" value="TAIR"/>
</dbReference>
<dbReference type="GO" id="GO:0009845">
    <property type="term" value="P:seed germination"/>
    <property type="evidence" value="ECO:0000315"/>
    <property type="project" value="TAIR"/>
</dbReference>
<dbReference type="GO" id="GO:0000244">
    <property type="term" value="P:spliceosomal tri-snRNP complex assembly"/>
    <property type="evidence" value="ECO:0007669"/>
    <property type="project" value="InterPro"/>
</dbReference>
<dbReference type="FunFam" id="1.10.287.4070:FF:000003">
    <property type="entry name" value="U4/U6 small nuclear ribonucleoprotein PRP31"/>
    <property type="match status" value="1"/>
</dbReference>
<dbReference type="FunFam" id="1.10.246.90:FF:000002">
    <property type="entry name" value="U4/U6 small nuclear ribonucleoprotein Prp31"/>
    <property type="match status" value="1"/>
</dbReference>
<dbReference type="Gene3D" id="1.10.287.4070">
    <property type="match status" value="1"/>
</dbReference>
<dbReference type="Gene3D" id="1.10.246.90">
    <property type="entry name" value="Nop domain"/>
    <property type="match status" value="1"/>
</dbReference>
<dbReference type="InterPro" id="IPR042239">
    <property type="entry name" value="Nop_C"/>
</dbReference>
<dbReference type="InterPro" id="IPR002687">
    <property type="entry name" value="Nop_dom"/>
</dbReference>
<dbReference type="InterPro" id="IPR036070">
    <property type="entry name" value="Nop_dom_sf"/>
</dbReference>
<dbReference type="InterPro" id="IPR012976">
    <property type="entry name" value="NOSIC"/>
</dbReference>
<dbReference type="InterPro" id="IPR027105">
    <property type="entry name" value="Prp31"/>
</dbReference>
<dbReference type="InterPro" id="IPR019175">
    <property type="entry name" value="Prp31_C"/>
</dbReference>
<dbReference type="PANTHER" id="PTHR13904">
    <property type="entry name" value="PRE-MRNA SPLICING FACTOR PRP31"/>
    <property type="match status" value="1"/>
</dbReference>
<dbReference type="PANTHER" id="PTHR13904:SF0">
    <property type="entry name" value="U4_U6 SMALL NUCLEAR RIBONUCLEOPROTEIN PRP31"/>
    <property type="match status" value="1"/>
</dbReference>
<dbReference type="Pfam" id="PF01798">
    <property type="entry name" value="Nop"/>
    <property type="match status" value="1"/>
</dbReference>
<dbReference type="Pfam" id="PF09785">
    <property type="entry name" value="Prp31_C"/>
    <property type="match status" value="1"/>
</dbReference>
<dbReference type="SMART" id="SM00931">
    <property type="entry name" value="NOSIC"/>
    <property type="match status" value="1"/>
</dbReference>
<dbReference type="SUPFAM" id="SSF89124">
    <property type="entry name" value="Nop domain"/>
    <property type="match status" value="1"/>
</dbReference>
<dbReference type="PROSITE" id="PS51358">
    <property type="entry name" value="NOP"/>
    <property type="match status" value="1"/>
</dbReference>
<comment type="function">
    <text evidence="1 4">Involved in pre-mRNA splicing. Required for the assembly of the U4/U5/U6 tri-snRNP complex, one of the building blocks of the spliceosome (By similarity). Functions in association with STA1 and ZOP1 in spliceosome dynamics and pre-mRNA splicing. Required for transcriptional regulation and pre-mRNA splicing of cold-responsive genes, such as LTI78/RD29A, KIN2/COR6.6 or COR15A, especially under cold stress. May play a role in stress response. Involved in transcriptional gene silencing of endogenous transposable elements, independently of the RNA-directed DNA methylation (RdDM) pathway. Seems not to participate in the small RNA biogenesis of the RdDM pathway (PubMed:25684655).</text>
</comment>
<comment type="subunit">
    <text evidence="1 4">Component of the U4/U6-U5 tri-snRNP complex composed of the U4, U6 and U5 snRNAs and pre-mRNA-splicing factors (By similarity). Interacts with STA1 and SOP1 (PubMed:25684655).</text>
</comment>
<comment type="subcellular location">
    <subcellularLocation>
        <location evidence="4">Nucleus</location>
    </subcellularLocation>
    <subcellularLocation>
        <location evidence="4">Nucleus</location>
        <location evidence="4">Cajal body</location>
    </subcellularLocation>
</comment>
<comment type="disruption phenotype">
    <text evidence="4">Developmental defects, semi-dwarf phenotype and reduced growth.</text>
</comment>
<comment type="similarity">
    <text evidence="6">Belongs to the PRP31 family.</text>
</comment>
<comment type="sequence caution" evidence="6">
    <conflict type="erroneous gene model prediction">
        <sequence resource="EMBL-CDS" id="AAC24050"/>
    </conflict>
</comment>
<gene>
    <name evidence="5" type="primary">PRP31</name>
    <name evidence="6" type="synonym">EMB1220</name>
    <name evidence="7" type="ordered locus">At1g60170</name>
    <name evidence="8" type="ORF">T13D8.6</name>
</gene>
<keyword id="KW-0507">mRNA processing</keyword>
<keyword id="KW-0508">mRNA splicing</keyword>
<keyword id="KW-0539">Nucleus</keyword>
<keyword id="KW-1185">Reference proteome</keyword>
<keyword id="KW-0687">Ribonucleoprotein</keyword>
<keyword id="KW-0694">RNA-binding</keyword>
<keyword id="KW-0747">Spliceosome</keyword>
<keyword id="KW-0346">Stress response</keyword>
<accession>Q8RXN6</accession>
<accession>O80740</accession>
<proteinExistence type="evidence at protein level"/>